<proteinExistence type="inferred from homology"/>
<keyword id="KW-0369">Histidine metabolism</keyword>
<keyword id="KW-0378">Hydrolase</keyword>
<keyword id="KW-0464">Manganese</keyword>
<keyword id="KW-0479">Metal-binding</keyword>
<accession>C1BBD1</accession>
<gene>
    <name evidence="1" type="primary">hutG</name>
    <name type="ordered locus">ROP_47370</name>
</gene>
<feature type="chain" id="PRO_1000148213" description="Formimidoylglutamase">
    <location>
        <begin position="1"/>
        <end position="320"/>
    </location>
</feature>
<feature type="binding site" evidence="1">
    <location>
        <position position="125"/>
    </location>
    <ligand>
        <name>Mn(2+)</name>
        <dbReference type="ChEBI" id="CHEBI:29035"/>
        <label>1</label>
    </ligand>
</feature>
<feature type="binding site" evidence="1">
    <location>
        <position position="153"/>
    </location>
    <ligand>
        <name>Mn(2+)</name>
        <dbReference type="ChEBI" id="CHEBI:29035"/>
        <label>1</label>
    </ligand>
</feature>
<feature type="binding site" evidence="1">
    <location>
        <position position="153"/>
    </location>
    <ligand>
        <name>Mn(2+)</name>
        <dbReference type="ChEBI" id="CHEBI:29035"/>
        <label>2</label>
    </ligand>
</feature>
<feature type="binding site" evidence="1">
    <location>
        <position position="155"/>
    </location>
    <ligand>
        <name>Mn(2+)</name>
        <dbReference type="ChEBI" id="CHEBI:29035"/>
        <label>2</label>
    </ligand>
</feature>
<feature type="binding site" evidence="1">
    <location>
        <position position="157"/>
    </location>
    <ligand>
        <name>Mn(2+)</name>
        <dbReference type="ChEBI" id="CHEBI:29035"/>
        <label>1</label>
    </ligand>
</feature>
<feature type="binding site" evidence="1">
    <location>
        <position position="244"/>
    </location>
    <ligand>
        <name>Mn(2+)</name>
        <dbReference type="ChEBI" id="CHEBI:29035"/>
        <label>1</label>
    </ligand>
</feature>
<feature type="binding site" evidence="1">
    <location>
        <position position="244"/>
    </location>
    <ligand>
        <name>Mn(2+)</name>
        <dbReference type="ChEBI" id="CHEBI:29035"/>
        <label>2</label>
    </ligand>
</feature>
<feature type="binding site" evidence="1">
    <location>
        <position position="246"/>
    </location>
    <ligand>
        <name>Mn(2+)</name>
        <dbReference type="ChEBI" id="CHEBI:29035"/>
        <label>2</label>
    </ligand>
</feature>
<name>HUTG_RHOOB</name>
<protein>
    <recommendedName>
        <fullName evidence="1">Formimidoylglutamase</fullName>
        <ecNumber evidence="1">3.5.3.8</ecNumber>
    </recommendedName>
    <alternativeName>
        <fullName evidence="1">Formiminoglutamase</fullName>
    </alternativeName>
    <alternativeName>
        <fullName evidence="1">Formiminoglutamate hydrolase</fullName>
    </alternativeName>
</protein>
<comment type="function">
    <text evidence="1">Catalyzes the conversion of N-formimidoyl-L-glutamate to L-glutamate and formamide.</text>
</comment>
<comment type="catalytic activity">
    <reaction evidence="1">
        <text>N-formimidoyl-L-glutamate + H2O = formamide + L-glutamate</text>
        <dbReference type="Rhea" id="RHEA:22492"/>
        <dbReference type="ChEBI" id="CHEBI:15377"/>
        <dbReference type="ChEBI" id="CHEBI:16397"/>
        <dbReference type="ChEBI" id="CHEBI:29985"/>
        <dbReference type="ChEBI" id="CHEBI:58928"/>
        <dbReference type="EC" id="3.5.3.8"/>
    </reaction>
</comment>
<comment type="cofactor">
    <cofactor evidence="1">
        <name>Mn(2+)</name>
        <dbReference type="ChEBI" id="CHEBI:29035"/>
    </cofactor>
    <text evidence="1">Binds 2 manganese ions per subunit.</text>
</comment>
<comment type="pathway">
    <text evidence="1">Amino-acid degradation; L-histidine degradation into L-glutamate; L-glutamate from N-formimidoyl-L-glutamate (hydrolase route): step 1/1.</text>
</comment>
<comment type="similarity">
    <text evidence="1">Belongs to the arginase family.</text>
</comment>
<dbReference type="EC" id="3.5.3.8" evidence="1"/>
<dbReference type="EMBL" id="AP011115">
    <property type="protein sequence ID" value="BAH52984.1"/>
    <property type="molecule type" value="Genomic_DNA"/>
</dbReference>
<dbReference type="RefSeq" id="WP_015888499.1">
    <property type="nucleotide sequence ID" value="NC_012522.1"/>
</dbReference>
<dbReference type="SMR" id="C1BBD1"/>
<dbReference type="STRING" id="632772.ROP_47370"/>
<dbReference type="KEGG" id="rop:ROP_47370"/>
<dbReference type="PATRIC" id="fig|632772.20.peg.4950"/>
<dbReference type="HOGENOM" id="CLU_039478_2_0_11"/>
<dbReference type="OrthoDB" id="9789727at2"/>
<dbReference type="UniPathway" id="UPA00379">
    <property type="reaction ID" value="UER00552"/>
</dbReference>
<dbReference type="Proteomes" id="UP000002212">
    <property type="component" value="Chromosome"/>
</dbReference>
<dbReference type="GO" id="GO:0008783">
    <property type="term" value="F:agmatinase activity"/>
    <property type="evidence" value="ECO:0007669"/>
    <property type="project" value="TreeGrafter"/>
</dbReference>
<dbReference type="GO" id="GO:0050415">
    <property type="term" value="F:formimidoylglutamase activity"/>
    <property type="evidence" value="ECO:0007669"/>
    <property type="project" value="UniProtKB-UniRule"/>
</dbReference>
<dbReference type="GO" id="GO:0030145">
    <property type="term" value="F:manganese ion binding"/>
    <property type="evidence" value="ECO:0007669"/>
    <property type="project" value="UniProtKB-UniRule"/>
</dbReference>
<dbReference type="GO" id="GO:0019556">
    <property type="term" value="P:L-histidine catabolic process to glutamate and formamide"/>
    <property type="evidence" value="ECO:0007669"/>
    <property type="project" value="UniProtKB-UniPathway"/>
</dbReference>
<dbReference type="GO" id="GO:0019557">
    <property type="term" value="P:L-histidine catabolic process to glutamate and formate"/>
    <property type="evidence" value="ECO:0007669"/>
    <property type="project" value="UniProtKB-UniPathway"/>
</dbReference>
<dbReference type="GO" id="GO:0033389">
    <property type="term" value="P:putrescine biosynthetic process from arginine, via agmatine"/>
    <property type="evidence" value="ECO:0007669"/>
    <property type="project" value="TreeGrafter"/>
</dbReference>
<dbReference type="CDD" id="cd09988">
    <property type="entry name" value="Formimidoylglutamase"/>
    <property type="match status" value="1"/>
</dbReference>
<dbReference type="Gene3D" id="3.40.800.10">
    <property type="entry name" value="Ureohydrolase domain"/>
    <property type="match status" value="1"/>
</dbReference>
<dbReference type="HAMAP" id="MF_00737">
    <property type="entry name" value="Formimidoylglutam"/>
    <property type="match status" value="1"/>
</dbReference>
<dbReference type="InterPro" id="IPR005923">
    <property type="entry name" value="HutG"/>
</dbReference>
<dbReference type="InterPro" id="IPR006035">
    <property type="entry name" value="Ureohydrolase"/>
</dbReference>
<dbReference type="InterPro" id="IPR023696">
    <property type="entry name" value="Ureohydrolase_dom_sf"/>
</dbReference>
<dbReference type="InterPro" id="IPR020855">
    <property type="entry name" value="Ureohydrolase_Mn_BS"/>
</dbReference>
<dbReference type="NCBIfam" id="TIGR01227">
    <property type="entry name" value="hutG"/>
    <property type="match status" value="1"/>
</dbReference>
<dbReference type="PANTHER" id="PTHR11358">
    <property type="entry name" value="ARGINASE/AGMATINASE"/>
    <property type="match status" value="1"/>
</dbReference>
<dbReference type="PANTHER" id="PTHR11358:SF35">
    <property type="entry name" value="FORMIMIDOYLGLUTAMASE"/>
    <property type="match status" value="1"/>
</dbReference>
<dbReference type="Pfam" id="PF00491">
    <property type="entry name" value="Arginase"/>
    <property type="match status" value="1"/>
</dbReference>
<dbReference type="PIRSF" id="PIRSF036979">
    <property type="entry name" value="Arginase"/>
    <property type="match status" value="1"/>
</dbReference>
<dbReference type="SUPFAM" id="SSF52768">
    <property type="entry name" value="Arginase/deacetylase"/>
    <property type="match status" value="1"/>
</dbReference>
<dbReference type="PROSITE" id="PS01053">
    <property type="entry name" value="ARGINASE_1"/>
    <property type="match status" value="1"/>
</dbReference>
<dbReference type="PROSITE" id="PS51409">
    <property type="entry name" value="ARGINASE_2"/>
    <property type="match status" value="1"/>
</dbReference>
<evidence type="ECO:0000255" key="1">
    <source>
        <dbReference type="HAMAP-Rule" id="MF_00737"/>
    </source>
</evidence>
<organism>
    <name type="scientific">Rhodococcus opacus (strain B4)</name>
    <dbReference type="NCBI Taxonomy" id="632772"/>
    <lineage>
        <taxon>Bacteria</taxon>
        <taxon>Bacillati</taxon>
        <taxon>Actinomycetota</taxon>
        <taxon>Actinomycetes</taxon>
        <taxon>Mycobacteriales</taxon>
        <taxon>Nocardiaceae</taxon>
        <taxon>Rhodococcus</taxon>
    </lineage>
</organism>
<reference key="1">
    <citation type="submission" date="2009-03" db="EMBL/GenBank/DDBJ databases">
        <title>Comparison of the complete genome sequences of Rhodococcus erythropolis PR4 and Rhodococcus opacus B4.</title>
        <authorList>
            <person name="Takarada H."/>
            <person name="Sekine M."/>
            <person name="Hosoyama A."/>
            <person name="Yamada R."/>
            <person name="Fujisawa T."/>
            <person name="Omata S."/>
            <person name="Shimizu A."/>
            <person name="Tsukatani N."/>
            <person name="Tanikawa S."/>
            <person name="Fujita N."/>
            <person name="Harayama S."/>
        </authorList>
    </citation>
    <scope>NUCLEOTIDE SEQUENCE [LARGE SCALE GENOMIC DNA]</scope>
    <source>
        <strain>B4</strain>
    </source>
</reference>
<sequence>MMENLLIPPPPWTGRMDGTSSHHLRWHQAVTPLQDGVEPGACVFIGFSSDEGVERNKGRRGASRGPDALRSALSSMALAEPLRAYDAGTVAVTDNRLEAGQEALGAVVAATLDAGQFPVVLGGGHEVAFGTYLGLAQASVRTPGKRIGILNLDAHFDLRSDPVPSSGTPFRQILEREHAAGTTLQYSVLGISQPSNTTALFDTARGYDVRYLLDDECSVSDRHRVAVFVSEFLSDVDLVYLTIDLDVLPAAVAPGVSAPAAYGVPAETIQFVCDAIAASGKLAVVDVAELNPSFDIDNRTARTAARFIHRIVTKRIPIVR</sequence>